<protein>
    <recommendedName>
        <fullName>Proprotein convertase subtilisin/kexin type 9</fullName>
        <ecNumber>3.4.21.-</ecNumber>
    </recommendedName>
    <alternativeName>
        <fullName>Proprotein convertase 9</fullName>
        <shortName>PC9</shortName>
    </alternativeName>
    <alternativeName>
        <fullName>Subtilisin/kexin-like protease PC9</fullName>
    </alternativeName>
</protein>
<reference key="1">
    <citation type="journal article" date="2007" name="PLoS ONE">
        <title>Evidence for positive selection in the C-terminal domain of the cholesterol metabolism gene PCSK9 based on phylogenetic analysis in 14 primate species.</title>
        <authorList>
            <person name="Ding K."/>
            <person name="McDonough S.J."/>
            <person name="Kullo I.J."/>
        </authorList>
    </citation>
    <scope>NUCLEOTIDE SEQUENCE [MRNA]</scope>
</reference>
<dbReference type="EC" id="3.4.21.-"/>
<dbReference type="EMBL" id="EF692500">
    <property type="protein sequence ID" value="ABV59220.1"/>
    <property type="molecule type" value="mRNA"/>
</dbReference>
<dbReference type="SMR" id="A8T658"/>
<dbReference type="GlyCosmos" id="A8T658">
    <property type="glycosylation" value="1 site, No reported glycans"/>
</dbReference>
<dbReference type="GO" id="GO:0009986">
    <property type="term" value="C:cell surface"/>
    <property type="evidence" value="ECO:0000250"/>
    <property type="project" value="UniProtKB"/>
</dbReference>
<dbReference type="GO" id="GO:0005737">
    <property type="term" value="C:cytoplasm"/>
    <property type="evidence" value="ECO:0000250"/>
    <property type="project" value="UniProtKB"/>
</dbReference>
<dbReference type="GO" id="GO:0005769">
    <property type="term" value="C:early endosome"/>
    <property type="evidence" value="ECO:0000250"/>
    <property type="project" value="UniProtKB"/>
</dbReference>
<dbReference type="GO" id="GO:0005783">
    <property type="term" value="C:endoplasmic reticulum"/>
    <property type="evidence" value="ECO:0000250"/>
    <property type="project" value="UniProtKB"/>
</dbReference>
<dbReference type="GO" id="GO:0005615">
    <property type="term" value="C:extracellular space"/>
    <property type="evidence" value="ECO:0007669"/>
    <property type="project" value="TreeGrafter"/>
</dbReference>
<dbReference type="GO" id="GO:0005794">
    <property type="term" value="C:Golgi apparatus"/>
    <property type="evidence" value="ECO:0000250"/>
    <property type="project" value="UniProtKB"/>
</dbReference>
<dbReference type="GO" id="GO:0005770">
    <property type="term" value="C:late endosome"/>
    <property type="evidence" value="ECO:0000250"/>
    <property type="project" value="UniProtKB"/>
</dbReference>
<dbReference type="GO" id="GO:0005764">
    <property type="term" value="C:lysosome"/>
    <property type="evidence" value="ECO:0000250"/>
    <property type="project" value="UniProtKB"/>
</dbReference>
<dbReference type="GO" id="GO:0034185">
    <property type="term" value="F:apolipoprotein binding"/>
    <property type="evidence" value="ECO:0000250"/>
    <property type="project" value="UniProtKB"/>
</dbReference>
<dbReference type="GO" id="GO:0030169">
    <property type="term" value="F:low-density lipoprotein particle binding"/>
    <property type="evidence" value="ECO:0000250"/>
    <property type="project" value="UniProtKB"/>
</dbReference>
<dbReference type="GO" id="GO:0004252">
    <property type="term" value="F:serine-type endopeptidase activity"/>
    <property type="evidence" value="ECO:0007669"/>
    <property type="project" value="InterPro"/>
</dbReference>
<dbReference type="GO" id="GO:0034189">
    <property type="term" value="F:very-low-density lipoprotein particle binding"/>
    <property type="evidence" value="ECO:0000250"/>
    <property type="project" value="UniProtKB"/>
</dbReference>
<dbReference type="GO" id="GO:0006915">
    <property type="term" value="P:apoptotic process"/>
    <property type="evidence" value="ECO:0007669"/>
    <property type="project" value="UniProtKB-KW"/>
</dbReference>
<dbReference type="GO" id="GO:0008203">
    <property type="term" value="P:cholesterol metabolic process"/>
    <property type="evidence" value="ECO:0007669"/>
    <property type="project" value="UniProtKB-KW"/>
</dbReference>
<dbReference type="GO" id="GO:0032802">
    <property type="term" value="P:low-density lipoprotein particle receptor catabolic process"/>
    <property type="evidence" value="ECO:0000250"/>
    <property type="project" value="UniProtKB"/>
</dbReference>
<dbReference type="GO" id="GO:0006508">
    <property type="term" value="P:proteolysis"/>
    <property type="evidence" value="ECO:0007669"/>
    <property type="project" value="UniProtKB-KW"/>
</dbReference>
<dbReference type="GO" id="GO:0043523">
    <property type="term" value="P:regulation of neuron apoptotic process"/>
    <property type="evidence" value="ECO:0000250"/>
    <property type="project" value="UniProtKB"/>
</dbReference>
<dbReference type="CDD" id="cd16839">
    <property type="entry name" value="PCSK9_C-CRD"/>
    <property type="match status" value="1"/>
</dbReference>
<dbReference type="CDD" id="cd04077">
    <property type="entry name" value="Peptidases_S8_PCSK9_ProteinaseK_like"/>
    <property type="match status" value="1"/>
</dbReference>
<dbReference type="FunFam" id="2.60.120.690:FF:000001">
    <property type="entry name" value="Proprotein convertase subtilisin/kexin type 9"/>
    <property type="match status" value="1"/>
</dbReference>
<dbReference type="FunFam" id="3.30.70.80:FF:000004">
    <property type="entry name" value="Proprotein convertase subtilisin/kexin type 9"/>
    <property type="match status" value="1"/>
</dbReference>
<dbReference type="FunFam" id="3.40.50.200:FF:000016">
    <property type="entry name" value="Proprotein convertase subtilisin/kexin type 9"/>
    <property type="match status" value="1"/>
</dbReference>
<dbReference type="Gene3D" id="3.30.70.80">
    <property type="entry name" value="Peptidase S8 propeptide/proteinase inhibitor I9"/>
    <property type="match status" value="1"/>
</dbReference>
<dbReference type="Gene3D" id="3.40.50.200">
    <property type="entry name" value="Peptidase S8/S53 domain"/>
    <property type="match status" value="1"/>
</dbReference>
<dbReference type="Gene3D" id="2.60.120.690">
    <property type="entry name" value="Proprotein convertase subtilisin/kexin type 9"/>
    <property type="match status" value="1"/>
</dbReference>
<dbReference type="InterPro" id="IPR041254">
    <property type="entry name" value="PCSK9_C1"/>
</dbReference>
<dbReference type="InterPro" id="IPR041052">
    <property type="entry name" value="PCSK9_C2"/>
</dbReference>
<dbReference type="InterPro" id="IPR041051">
    <property type="entry name" value="PCSK9_C3"/>
</dbReference>
<dbReference type="InterPro" id="IPR034193">
    <property type="entry name" value="PCSK9_ProteinaseK-like"/>
</dbReference>
<dbReference type="InterPro" id="IPR000209">
    <property type="entry name" value="Peptidase_S8/S53_dom"/>
</dbReference>
<dbReference type="InterPro" id="IPR036852">
    <property type="entry name" value="Peptidase_S8/S53_dom_sf"/>
</dbReference>
<dbReference type="InterPro" id="IPR050131">
    <property type="entry name" value="Peptidase_S8_subtilisin-like"/>
</dbReference>
<dbReference type="InterPro" id="IPR015500">
    <property type="entry name" value="Peptidase_S8_subtilisin-rel"/>
</dbReference>
<dbReference type="InterPro" id="IPR010259">
    <property type="entry name" value="S8pro/Inhibitor_I9"/>
</dbReference>
<dbReference type="InterPro" id="IPR037045">
    <property type="entry name" value="S8pro/Inhibitor_I9_sf"/>
</dbReference>
<dbReference type="PANTHER" id="PTHR43806">
    <property type="entry name" value="PEPTIDASE S8"/>
    <property type="match status" value="1"/>
</dbReference>
<dbReference type="PANTHER" id="PTHR43806:SF60">
    <property type="entry name" value="PROPROTEIN CONVERTASE SUBTILISIN_KEXIN TYPE 9"/>
    <property type="match status" value="1"/>
</dbReference>
<dbReference type="Pfam" id="PF05922">
    <property type="entry name" value="Inhibitor_I9"/>
    <property type="match status" value="1"/>
</dbReference>
<dbReference type="Pfam" id="PF18459">
    <property type="entry name" value="PCSK9_C1"/>
    <property type="match status" value="1"/>
</dbReference>
<dbReference type="Pfam" id="PF18464">
    <property type="entry name" value="PCSK9_C2"/>
    <property type="match status" value="1"/>
</dbReference>
<dbReference type="Pfam" id="PF18463">
    <property type="entry name" value="PCSK9_C3"/>
    <property type="match status" value="1"/>
</dbReference>
<dbReference type="Pfam" id="PF00082">
    <property type="entry name" value="Peptidase_S8"/>
    <property type="match status" value="1"/>
</dbReference>
<dbReference type="PRINTS" id="PR00723">
    <property type="entry name" value="SUBTILISIN"/>
</dbReference>
<dbReference type="SUPFAM" id="SSF54897">
    <property type="entry name" value="Protease propeptides/inhibitors"/>
    <property type="match status" value="1"/>
</dbReference>
<dbReference type="SUPFAM" id="SSF52743">
    <property type="entry name" value="Subtilisin-like"/>
    <property type="match status" value="1"/>
</dbReference>
<dbReference type="PROSITE" id="PS51892">
    <property type="entry name" value="SUBTILASE"/>
    <property type="match status" value="1"/>
</dbReference>
<feature type="signal peptide" evidence="1">
    <location>
        <begin position="1"/>
        <end position="28"/>
    </location>
</feature>
<feature type="propeptide" id="PRO_0000318292" evidence="1">
    <location>
        <begin position="29"/>
        <end position="150"/>
    </location>
</feature>
<feature type="chain" id="PRO_0000318293" description="Proprotein convertase subtilisin/kexin type 9">
    <location>
        <begin position="151"/>
        <end position="690"/>
    </location>
</feature>
<feature type="domain" description="Inhibitor I9" evidence="3">
    <location>
        <begin position="75"/>
        <end position="147"/>
    </location>
</feature>
<feature type="domain" description="Peptidase S8" evidence="4">
    <location>
        <begin position="153"/>
        <end position="459"/>
    </location>
</feature>
<feature type="region of interest" description="C-terminal domain" evidence="1">
    <location>
        <begin position="448"/>
        <end position="690"/>
    </location>
</feature>
<feature type="active site" description="Charge relay system" evidence="4">
    <location>
        <position position="184"/>
    </location>
</feature>
<feature type="active site" description="Charge relay system" evidence="4">
    <location>
        <position position="224"/>
    </location>
</feature>
<feature type="active site" description="Charge relay system" evidence="4">
    <location>
        <position position="384"/>
    </location>
</feature>
<feature type="site" description="Cleavage; by autolysis" evidence="1">
    <location>
        <begin position="150"/>
        <end position="151"/>
    </location>
</feature>
<feature type="site" description="Cleavage; by furin and PCSK5" evidence="1">
    <location>
        <begin position="216"/>
        <end position="217"/>
    </location>
</feature>
<feature type="modified residue" description="Sulfotyrosine" evidence="1">
    <location>
        <position position="36"/>
    </location>
</feature>
<feature type="modified residue" description="Phosphoserine" evidence="2">
    <location>
        <position position="45"/>
    </location>
</feature>
<feature type="modified residue" description="Phosphoserine" evidence="2">
    <location>
        <position position="686"/>
    </location>
</feature>
<feature type="glycosylation site" description="N-linked (GlcNAc...) asparagine" evidence="3">
    <location>
        <position position="531"/>
    </location>
</feature>
<feature type="disulfide bond" evidence="3">
    <location>
        <begin position="221"/>
        <end position="253"/>
    </location>
</feature>
<feature type="disulfide bond" evidence="3">
    <location>
        <begin position="321"/>
        <end position="356"/>
    </location>
</feature>
<feature type="disulfide bond" evidence="3">
    <location>
        <begin position="455"/>
        <end position="525"/>
    </location>
</feature>
<feature type="disulfide bond" evidence="3">
    <location>
        <begin position="475"/>
        <end position="524"/>
    </location>
</feature>
<feature type="disulfide bond" evidence="3">
    <location>
        <begin position="484"/>
        <end position="507"/>
    </location>
</feature>
<feature type="disulfide bond" evidence="3">
    <location>
        <begin position="532"/>
        <end position="599"/>
    </location>
</feature>
<feature type="disulfide bond" evidence="3">
    <location>
        <begin position="550"/>
        <end position="598"/>
    </location>
</feature>
<feature type="disulfide bond" evidence="3">
    <location>
        <begin position="560"/>
        <end position="586"/>
    </location>
</feature>
<feature type="disulfide bond" evidence="3">
    <location>
        <begin position="606"/>
        <end position="677"/>
    </location>
</feature>
<feature type="disulfide bond" evidence="3">
    <location>
        <begin position="624"/>
        <end position="676"/>
    </location>
</feature>
<feature type="disulfide bond" evidence="3">
    <location>
        <begin position="633"/>
        <end position="652"/>
    </location>
</feature>
<gene>
    <name type="primary">PCSK9</name>
</gene>
<accession>A8T658</accession>
<evidence type="ECO:0000250" key="1"/>
<evidence type="ECO:0000250" key="2">
    <source>
        <dbReference type="UniProtKB" id="Q8NBP7"/>
    </source>
</evidence>
<evidence type="ECO:0000255" key="3"/>
<evidence type="ECO:0000255" key="4">
    <source>
        <dbReference type="PROSITE-ProRule" id="PRU01240"/>
    </source>
</evidence>
<evidence type="ECO:0000305" key="5"/>
<sequence length="690" mass="74267">MGTVSSRRSWWPLPLLLLLLLGPAGARAQEDEDGDYEELVLALRSEEDGLAEAPEHGATATFHRCAKDPWRLPGTYVVVLKEETHRSQSERTARRLQAQAARRGYLTKILHVFHDLLPGFLVKMSGDLLELALKLPHVDYIEEDSSVFAQSIPWNLERITPPRYRADEYQPPDGGSLVEVYLLDTSIQSDHREIEGRVMVTDFENVPEEDGTRFHRQASKCDSHGTHLAGVVSGRDAGVAKGASMRSLRVLNCQGKGTVSGTLIGLEFIRKSQLVQPVGPLVVLMPLAGGYSRVLNAACQRLARAGVVLVTAAGNFRDDACLYSPASAPEVITVGATNAQDQPVTLGTLGTNFGRCVDLFAPGEDIIGASSDCSTCFVSQSGTSQAAAHVAGIAAMMLSVEPELTLAELRQRLIHFSAKDVINEVWFPEDQRVLTPNLVAALPPSTHGAGWQLFCRTVWSAHSGPTRMATAIARCAPDEELLSCSSFSRSGKRRGERMEAQGGKLVCRAHNAFGGEGVCAIARCCLLPQANCSVHTAPPAGSGMGTRVLCHQQVHVLTGCSSHWEVEDLGTHKPPVLRPRGQPNQCVGHREASIHASCCRAPGLECKVKEHGIPAPQEQVTVACEEGWTLTGCSALPGTSHVLGAYAVDNTCVVRSRDISTTGSTSEEAMAAVAICCRRRHLAQASQELQ</sequence>
<name>PCSK9_PONPY</name>
<proteinExistence type="evidence at transcript level"/>
<keyword id="KW-0053">Apoptosis</keyword>
<keyword id="KW-0068">Autocatalytic cleavage</keyword>
<keyword id="KW-0106">Calcium</keyword>
<keyword id="KW-0153">Cholesterol metabolism</keyword>
<keyword id="KW-0963">Cytoplasm</keyword>
<keyword id="KW-1015">Disulfide bond</keyword>
<keyword id="KW-0256">Endoplasmic reticulum</keyword>
<keyword id="KW-0967">Endosome</keyword>
<keyword id="KW-0325">Glycoprotein</keyword>
<keyword id="KW-0333">Golgi apparatus</keyword>
<keyword id="KW-0378">Hydrolase</keyword>
<keyword id="KW-0443">Lipid metabolism</keyword>
<keyword id="KW-0458">Lysosome</keyword>
<keyword id="KW-0597">Phosphoprotein</keyword>
<keyword id="KW-0645">Protease</keyword>
<keyword id="KW-0964">Secreted</keyword>
<keyword id="KW-0720">Serine protease</keyword>
<keyword id="KW-0732">Signal</keyword>
<keyword id="KW-0753">Steroid metabolism</keyword>
<keyword id="KW-1207">Sterol metabolism</keyword>
<keyword id="KW-0765">Sulfation</keyword>
<keyword id="KW-0865">Zymogen</keyword>
<comment type="function">
    <text evidence="1">Crucial player in the regulation of plasma cholesterol homeostasis. Binds to low-density lipid receptor family members: low density lipoprotein receptor (LDLR), very low density lipoprotein receptor (VLDLR), apolipoprotein E receptor (LRP1/APOER) and apolipoprotein receptor 2 (LRP8/APOER2), and promotes their degradation in intracellular acidic compartments. Acts via a non-proteolytic mechanism to enhance the degradation of the hepatic LDLR through a clathrin LDLRAP1/ARH-mediated pathway. May prevent the recycling of LDLR from endosomes to the cell surface or direct it to lysosomes for degradation. Can induce ubiquitination of LDLR leading to its subsequent degradation. Inhibits intracellular degradation of APOB via the autophagosome/lysosome pathway in a LDLR-independent manner. Involved in the disposal of non-acetylated intermediates of BACE1 in the early secretory pathway. Inhibits epithelial Na(+) channel (ENaC)-mediated Na(+) absorption by reducing ENaC surface expression primarily by increasing its proteasomal degradation. Regulates neuronal apoptosis via modulation of LRP8/APOER2 levels and related anti-apoptotic signaling pathways (By similarity).</text>
</comment>
<comment type="cofactor">
    <cofactor evidence="1">
        <name>Ca(2+)</name>
        <dbReference type="ChEBI" id="CHEBI:29108"/>
    </cofactor>
</comment>
<comment type="activity regulation">
    <text evidence="1">Its proteolytic activity is autoinhibited by the non-covalent binding of the propeptide to the catalytic domain. Inhibited by EGTA (By similarity).</text>
</comment>
<comment type="subunit">
    <text evidence="2">Monomer. Can self-associate to form dimers and higher multimers which may have increased LDLR degrading activity. The precursor protein but not the mature protein may form multimers. Interacts with APOB, VLDLR, LRP8/APOER2 and BACE1. The full-length immature form (pro-PCSK9) interacts with SCNN1A, SCNN1B and SCNN1G. The pro-PCSK9 form (via C-terminal domain) interacts with LDLR. Interacts (via the C-terminal domain) with ANXA2 (via repeat Annexin 1); the interaction inhibits the degradation of LDLR.</text>
</comment>
<comment type="subcellular location">
    <subcellularLocation>
        <location evidence="1">Cytoplasm</location>
    </subcellularLocation>
    <subcellularLocation>
        <location evidence="1">Secreted</location>
    </subcellularLocation>
    <subcellularLocation>
        <location evidence="1">Endosome</location>
    </subcellularLocation>
    <subcellularLocation>
        <location evidence="1">Lysosome</location>
    </subcellularLocation>
    <subcellularLocation>
        <location evidence="1">Cell surface</location>
    </subcellularLocation>
    <subcellularLocation>
        <location evidence="1">Endoplasmic reticulum</location>
    </subcellularLocation>
    <subcellularLocation>
        <location evidence="1">Golgi apparatus</location>
    </subcellularLocation>
    <text evidence="1">Autocatalytic cleavage is required to transport it from the endoplasmic reticulum to the Golgi apparatus and for the secretion of the mature protein. Localizes to the endoplasmic reticulum in the absence of LDLR and colocalizes to the cell surface and to the endosomes/lysosomes in the presence of LDLR. The sorting to the cell surface and endosomes is required in order to fully promote LDLR degradation (By similarity).</text>
</comment>
<comment type="domain">
    <text evidence="1">The C-terminal domain (CRD) is essential for the LDLR-binding and degrading activities.</text>
</comment>
<comment type="domain">
    <text evidence="1">The catalytic domain is responsible for mediating its self-association.</text>
</comment>
<comment type="PTM">
    <text evidence="1">Cleavage by furin and PCSK5 generates a truncated inactive protein that is unable to induce LDLR degradation.</text>
</comment>
<comment type="PTM">
    <text evidence="1">Undergoes autocatalytic cleavage in the endoplasmic reticulum to release the propeptide from the N-terminus and the cleavage of the propeptide is strictly required for its maturation and activation. The cleaved propeptide however remains associated with the catalytic domain through non-covalent interactions, preventing potential substrates from accessing its active site. As a result, it is secreted from cells as a propeptide-containing, enzymatically inactive protein (By similarity).</text>
</comment>
<comment type="PTM">
    <text evidence="1">Phosphorylation protects the propeptide against proteolysis.</text>
</comment>
<comment type="similarity">
    <text evidence="5">Belongs to the peptidase S8 family.</text>
</comment>
<organism>
    <name type="scientific">Pongo pygmaeus</name>
    <name type="common">Bornean orangutan</name>
    <dbReference type="NCBI Taxonomy" id="9600"/>
    <lineage>
        <taxon>Eukaryota</taxon>
        <taxon>Metazoa</taxon>
        <taxon>Chordata</taxon>
        <taxon>Craniata</taxon>
        <taxon>Vertebrata</taxon>
        <taxon>Euteleostomi</taxon>
        <taxon>Mammalia</taxon>
        <taxon>Eutheria</taxon>
        <taxon>Euarchontoglires</taxon>
        <taxon>Primates</taxon>
        <taxon>Haplorrhini</taxon>
        <taxon>Catarrhini</taxon>
        <taxon>Hominidae</taxon>
        <taxon>Pongo</taxon>
    </lineage>
</organism>